<dbReference type="EC" id="1.2.1.8" evidence="1"/>
<dbReference type="EMBL" id="CP000058">
    <property type="protein sequence ID" value="AAZ35153.1"/>
    <property type="molecule type" value="Genomic_DNA"/>
</dbReference>
<dbReference type="RefSeq" id="WP_004654813.1">
    <property type="nucleotide sequence ID" value="NC_005773.3"/>
</dbReference>
<dbReference type="SMR" id="Q48CM6"/>
<dbReference type="KEGG" id="psp:PSPPH_4767"/>
<dbReference type="eggNOG" id="COG1012">
    <property type="taxonomic scope" value="Bacteria"/>
</dbReference>
<dbReference type="HOGENOM" id="CLU_005391_0_0_6"/>
<dbReference type="UniPathway" id="UPA00529">
    <property type="reaction ID" value="UER00386"/>
</dbReference>
<dbReference type="Proteomes" id="UP000000551">
    <property type="component" value="Chromosome"/>
</dbReference>
<dbReference type="GO" id="GO:0008802">
    <property type="term" value="F:betaine-aldehyde dehydrogenase (NAD+) activity"/>
    <property type="evidence" value="ECO:0007669"/>
    <property type="project" value="UniProtKB-UniRule"/>
</dbReference>
<dbReference type="GO" id="GO:0046872">
    <property type="term" value="F:metal ion binding"/>
    <property type="evidence" value="ECO:0007669"/>
    <property type="project" value="UniProtKB-KW"/>
</dbReference>
<dbReference type="GO" id="GO:0019285">
    <property type="term" value="P:glycine betaine biosynthetic process from choline"/>
    <property type="evidence" value="ECO:0007669"/>
    <property type="project" value="UniProtKB-UniRule"/>
</dbReference>
<dbReference type="CDD" id="cd07090">
    <property type="entry name" value="ALDH_F9_TMBADH"/>
    <property type="match status" value="1"/>
</dbReference>
<dbReference type="FunFam" id="3.40.309.10:FF:000014">
    <property type="entry name" value="NAD/NADP-dependent betaine aldehyde dehydrogenase"/>
    <property type="match status" value="1"/>
</dbReference>
<dbReference type="FunFam" id="3.40.605.10:FF:000007">
    <property type="entry name" value="NAD/NADP-dependent betaine aldehyde dehydrogenase"/>
    <property type="match status" value="1"/>
</dbReference>
<dbReference type="Gene3D" id="3.40.605.10">
    <property type="entry name" value="Aldehyde Dehydrogenase, Chain A, domain 1"/>
    <property type="match status" value="1"/>
</dbReference>
<dbReference type="Gene3D" id="3.40.309.10">
    <property type="entry name" value="Aldehyde Dehydrogenase, Chain A, domain 2"/>
    <property type="match status" value="1"/>
</dbReference>
<dbReference type="HAMAP" id="MF_00804">
    <property type="entry name" value="BADH"/>
    <property type="match status" value="1"/>
</dbReference>
<dbReference type="InterPro" id="IPR016161">
    <property type="entry name" value="Ald_DH/histidinol_DH"/>
</dbReference>
<dbReference type="InterPro" id="IPR016163">
    <property type="entry name" value="Ald_DH_C"/>
</dbReference>
<dbReference type="InterPro" id="IPR016160">
    <property type="entry name" value="Ald_DH_CS_CYS"/>
</dbReference>
<dbReference type="InterPro" id="IPR029510">
    <property type="entry name" value="Ald_DH_CS_GLU"/>
</dbReference>
<dbReference type="InterPro" id="IPR016162">
    <property type="entry name" value="Ald_DH_N"/>
</dbReference>
<dbReference type="InterPro" id="IPR015590">
    <property type="entry name" value="Aldehyde_DH_dom"/>
</dbReference>
<dbReference type="InterPro" id="IPR011264">
    <property type="entry name" value="BADH"/>
</dbReference>
<dbReference type="NCBIfam" id="TIGR01804">
    <property type="entry name" value="BADH"/>
    <property type="match status" value="1"/>
</dbReference>
<dbReference type="NCBIfam" id="NF009725">
    <property type="entry name" value="PRK13252.1"/>
    <property type="match status" value="1"/>
</dbReference>
<dbReference type="PANTHER" id="PTHR11699">
    <property type="entry name" value="ALDEHYDE DEHYDROGENASE-RELATED"/>
    <property type="match status" value="1"/>
</dbReference>
<dbReference type="Pfam" id="PF00171">
    <property type="entry name" value="Aldedh"/>
    <property type="match status" value="1"/>
</dbReference>
<dbReference type="SUPFAM" id="SSF53720">
    <property type="entry name" value="ALDH-like"/>
    <property type="match status" value="1"/>
</dbReference>
<dbReference type="PROSITE" id="PS00070">
    <property type="entry name" value="ALDEHYDE_DEHYDR_CYS"/>
    <property type="match status" value="1"/>
</dbReference>
<dbReference type="PROSITE" id="PS00687">
    <property type="entry name" value="ALDEHYDE_DEHYDR_GLU"/>
    <property type="match status" value="1"/>
</dbReference>
<evidence type="ECO:0000255" key="1">
    <source>
        <dbReference type="HAMAP-Rule" id="MF_00804"/>
    </source>
</evidence>
<organism>
    <name type="scientific">Pseudomonas savastanoi pv. phaseolicola (strain 1448A / Race 6)</name>
    <name type="common">Pseudomonas syringae pv. phaseolicola (strain 1448A / Race 6)</name>
    <dbReference type="NCBI Taxonomy" id="264730"/>
    <lineage>
        <taxon>Bacteria</taxon>
        <taxon>Pseudomonadati</taxon>
        <taxon>Pseudomonadota</taxon>
        <taxon>Gammaproteobacteria</taxon>
        <taxon>Pseudomonadales</taxon>
        <taxon>Pseudomonadaceae</taxon>
        <taxon>Pseudomonas</taxon>
    </lineage>
</organism>
<feature type="chain" id="PRO_0000056549" description="Betaine aldehyde dehydrogenase">
    <location>
        <begin position="1"/>
        <end position="490"/>
    </location>
</feature>
<feature type="active site" description="Charge relay system" evidence="1">
    <location>
        <position position="162"/>
    </location>
</feature>
<feature type="active site" description="Proton acceptor" evidence="1">
    <location>
        <position position="252"/>
    </location>
</feature>
<feature type="active site" description="Nucleophile" evidence="1">
    <location>
        <position position="286"/>
    </location>
</feature>
<feature type="active site" description="Charge relay system" evidence="1">
    <location>
        <position position="464"/>
    </location>
</feature>
<feature type="binding site" evidence="1">
    <location>
        <position position="27"/>
    </location>
    <ligand>
        <name>K(+)</name>
        <dbReference type="ChEBI" id="CHEBI:29103"/>
        <label>1</label>
    </ligand>
</feature>
<feature type="binding site" evidence="1">
    <location>
        <position position="93"/>
    </location>
    <ligand>
        <name>K(+)</name>
        <dbReference type="ChEBI" id="CHEBI:29103"/>
        <label>1</label>
    </ligand>
</feature>
<feature type="binding site" evidence="1">
    <location>
        <begin position="150"/>
        <end position="152"/>
    </location>
    <ligand>
        <name>NAD(+)</name>
        <dbReference type="ChEBI" id="CHEBI:57540"/>
    </ligand>
</feature>
<feature type="binding site" evidence="1">
    <location>
        <begin position="176"/>
        <end position="179"/>
    </location>
    <ligand>
        <name>NAD(+)</name>
        <dbReference type="ChEBI" id="CHEBI:57540"/>
    </ligand>
</feature>
<feature type="binding site" evidence="1">
    <location>
        <position position="180"/>
    </location>
    <ligand>
        <name>K(+)</name>
        <dbReference type="ChEBI" id="CHEBI:29103"/>
        <label>1</label>
    </ligand>
</feature>
<feature type="binding site" evidence="1">
    <location>
        <begin position="230"/>
        <end position="233"/>
    </location>
    <ligand>
        <name>NAD(+)</name>
        <dbReference type="ChEBI" id="CHEBI:57540"/>
    </ligand>
</feature>
<feature type="binding site" evidence="1">
    <location>
        <position position="246"/>
    </location>
    <ligand>
        <name>K(+)</name>
        <dbReference type="ChEBI" id="CHEBI:29103"/>
        <label>2</label>
    </ligand>
</feature>
<feature type="binding site" evidence="1">
    <location>
        <position position="254"/>
    </location>
    <ligand>
        <name>NAD(+)</name>
        <dbReference type="ChEBI" id="CHEBI:57540"/>
    </ligand>
</feature>
<feature type="binding site" description="covalent" evidence="1">
    <location>
        <position position="286"/>
    </location>
    <ligand>
        <name>NAD(+)</name>
        <dbReference type="ChEBI" id="CHEBI:57540"/>
    </ligand>
</feature>
<feature type="binding site" evidence="1">
    <location>
        <position position="387"/>
    </location>
    <ligand>
        <name>NAD(+)</name>
        <dbReference type="ChEBI" id="CHEBI:57540"/>
    </ligand>
</feature>
<feature type="binding site" evidence="1">
    <location>
        <position position="457"/>
    </location>
    <ligand>
        <name>K(+)</name>
        <dbReference type="ChEBI" id="CHEBI:29103"/>
        <label>2</label>
    </ligand>
</feature>
<feature type="binding site" evidence="1">
    <location>
        <position position="460"/>
    </location>
    <ligand>
        <name>K(+)</name>
        <dbReference type="ChEBI" id="CHEBI:29103"/>
        <label>2</label>
    </ligand>
</feature>
<feature type="site" description="Seems to be a necessary countercharge to the potassium cations" evidence="1">
    <location>
        <position position="248"/>
    </location>
</feature>
<feature type="modified residue" description="Cysteine sulfenic acid (-SOH)" evidence="1">
    <location>
        <position position="286"/>
    </location>
</feature>
<name>BETB_PSE14</name>
<proteinExistence type="inferred from homology"/>
<reference key="1">
    <citation type="journal article" date="2005" name="J. Bacteriol.">
        <title>Whole-genome sequence analysis of Pseudomonas syringae pv. phaseolicola 1448A reveals divergence among pathovars in genes involved in virulence and transposition.</title>
        <authorList>
            <person name="Joardar V."/>
            <person name="Lindeberg M."/>
            <person name="Jackson R.W."/>
            <person name="Selengut J."/>
            <person name="Dodson R."/>
            <person name="Brinkac L.M."/>
            <person name="Daugherty S.C."/>
            <person name="DeBoy R.T."/>
            <person name="Durkin A.S."/>
            <person name="Gwinn Giglio M."/>
            <person name="Madupu R."/>
            <person name="Nelson W.C."/>
            <person name="Rosovitz M.J."/>
            <person name="Sullivan S.A."/>
            <person name="Crabtree J."/>
            <person name="Creasy T."/>
            <person name="Davidsen T.M."/>
            <person name="Haft D.H."/>
            <person name="Zafar N."/>
            <person name="Zhou L."/>
            <person name="Halpin R."/>
            <person name="Holley T."/>
            <person name="Khouri H.M."/>
            <person name="Feldblyum T.V."/>
            <person name="White O."/>
            <person name="Fraser C.M."/>
            <person name="Chatterjee A.K."/>
            <person name="Cartinhour S."/>
            <person name="Schneider D."/>
            <person name="Mansfield J.W."/>
            <person name="Collmer A."/>
            <person name="Buell R."/>
        </authorList>
    </citation>
    <scope>NUCLEOTIDE SEQUENCE [LARGE SCALE GENOMIC DNA]</scope>
    <source>
        <strain>1448A / Race 6</strain>
    </source>
</reference>
<protein>
    <recommendedName>
        <fullName evidence="1">Betaine aldehyde dehydrogenase</fullName>
        <shortName evidence="1">BADH</shortName>
        <ecNumber evidence="1">1.2.1.8</ecNumber>
    </recommendedName>
</protein>
<accession>Q48CM6</accession>
<keyword id="KW-0479">Metal-binding</keyword>
<keyword id="KW-0520">NAD</keyword>
<keyword id="KW-0521">NADP</keyword>
<keyword id="KW-0558">Oxidation</keyword>
<keyword id="KW-0560">Oxidoreductase</keyword>
<keyword id="KW-0630">Potassium</keyword>
<sequence length="490" mass="53157">MARFELQKLYIDGGYVDASNTETFDAINPANGEVLAQIQRAGKEDVERAVVAAEKGQKIWAAMTAVERSRILRRAVDILRERNDELAALETLDTGKAISETRYVDIVTGADVLEYYAGLVPAIEGEQIPLRDSSFVYTRREPLGVVAGIGAWNYPIQIALWKSAPALAAGNAMIFKPSEVTSLTTLKLAEIYTEAGVPNGVFNVLTGSGREVGTWITEHPRIEKVSFTGGTDTGKKVMASASSSSLKEVTMELGGKSPLIVFDDADLDRAADIAMMANFYSSGQVCTNGTRVFVPNALKAEFEAKILERVKRIRAGNPEDENINFGPLVSFEHMESVLGYIAKGKEQGARLLCGGDRLTGGVFDKGAFVAPTVFTDCTDEMTIVREEIFGPVMSILGYDTEEEVVRRANDTDFGLAAGIVTRDLNRAHRVIHLLEAGICWINAWGESAAQMPVGGYKQSGVGRENGISSLAQYTRIKSVQIELGDYASVF</sequence>
<gene>
    <name evidence="1" type="primary">betB</name>
    <name type="ordered locus">PSPPH_4767</name>
</gene>
<comment type="function">
    <text evidence="1">Involved in the biosynthesis of the osmoprotectant glycine betaine. Catalyzes the irreversible oxidation of betaine aldehyde to the corresponding acid.</text>
</comment>
<comment type="catalytic activity">
    <reaction evidence="1">
        <text>betaine aldehyde + NAD(+) + H2O = glycine betaine + NADH + 2 H(+)</text>
        <dbReference type="Rhea" id="RHEA:15305"/>
        <dbReference type="ChEBI" id="CHEBI:15377"/>
        <dbReference type="ChEBI" id="CHEBI:15378"/>
        <dbReference type="ChEBI" id="CHEBI:15710"/>
        <dbReference type="ChEBI" id="CHEBI:17750"/>
        <dbReference type="ChEBI" id="CHEBI:57540"/>
        <dbReference type="ChEBI" id="CHEBI:57945"/>
        <dbReference type="EC" id="1.2.1.8"/>
    </reaction>
    <physiologicalReaction direction="left-to-right" evidence="1">
        <dbReference type="Rhea" id="RHEA:15306"/>
    </physiologicalReaction>
</comment>
<comment type="cofactor">
    <cofactor evidence="1">
        <name>K(+)</name>
        <dbReference type="ChEBI" id="CHEBI:29103"/>
    </cofactor>
    <text evidence="1">Binds 2 potassium ions per subunit.</text>
</comment>
<comment type="pathway">
    <text evidence="1">Amine and polyamine biosynthesis; betaine biosynthesis via choline pathway; betaine from betaine aldehyde: step 1/1.</text>
</comment>
<comment type="subunit">
    <text evidence="1">Dimer of dimers.</text>
</comment>
<comment type="similarity">
    <text evidence="1">Belongs to the aldehyde dehydrogenase family.</text>
</comment>